<reference key="1">
    <citation type="journal article" date="2006" name="Proc. Natl. Acad. Sci. U.S.A.">
        <title>Genome reduction in Leptospira borgpetersenii reflects limited transmission potential.</title>
        <authorList>
            <person name="Bulach D.M."/>
            <person name="Zuerner R.L."/>
            <person name="Wilson P."/>
            <person name="Seemann T."/>
            <person name="McGrath A."/>
            <person name="Cullen P.A."/>
            <person name="Davis J."/>
            <person name="Johnson M."/>
            <person name="Kuczek E."/>
            <person name="Alt D.P."/>
            <person name="Peterson-Burch B."/>
            <person name="Coppel R.L."/>
            <person name="Rood J.I."/>
            <person name="Davies J.K."/>
            <person name="Adler B."/>
        </authorList>
    </citation>
    <scope>NUCLEOTIDE SEQUENCE [LARGE SCALE GENOMIC DNA]</scope>
    <source>
        <strain>L550</strain>
    </source>
</reference>
<organism>
    <name type="scientific">Leptospira borgpetersenii serovar Hardjo-bovis (strain L550)</name>
    <dbReference type="NCBI Taxonomy" id="355276"/>
    <lineage>
        <taxon>Bacteria</taxon>
        <taxon>Pseudomonadati</taxon>
        <taxon>Spirochaetota</taxon>
        <taxon>Spirochaetia</taxon>
        <taxon>Leptospirales</taxon>
        <taxon>Leptospiraceae</taxon>
        <taxon>Leptospira</taxon>
    </lineage>
</organism>
<sequence length="176" mass="20061">MEQATLGGGCFWCLEAVYQMVEGIESVVSGYAAGQTKNPDYRSVCSGTTGHAETVQITFDSKVISYFEILEIFWISHDPTTLNRQGNDVGIQYRSIIPYHSPEQKKQAEQSIQKAGEHFSDPIVTQVEILKEFYPAEDYHQNYFRTNPKQAYCHYVIKPKIDKYLKTGFKVKKEGS</sequence>
<proteinExistence type="inferred from homology"/>
<protein>
    <recommendedName>
        <fullName evidence="1">Peptide methionine sulfoxide reductase MsrA</fullName>
        <shortName evidence="1">Protein-methionine-S-oxide reductase</shortName>
        <ecNumber evidence="1">1.8.4.11</ecNumber>
    </recommendedName>
    <alternativeName>
        <fullName evidence="1">Peptide-methionine (S)-S-oxide reductase</fullName>
        <shortName evidence="1">Peptide Met(O) reductase</shortName>
    </alternativeName>
</protein>
<evidence type="ECO:0000255" key="1">
    <source>
        <dbReference type="HAMAP-Rule" id="MF_01401"/>
    </source>
</evidence>
<feature type="chain" id="PRO_1000068335" description="Peptide methionine sulfoxide reductase MsrA">
    <location>
        <begin position="1"/>
        <end position="176"/>
    </location>
</feature>
<feature type="active site" evidence="1">
    <location>
        <position position="10"/>
    </location>
</feature>
<accession>Q055M2</accession>
<keyword id="KW-0560">Oxidoreductase</keyword>
<dbReference type="EC" id="1.8.4.11" evidence="1"/>
<dbReference type="EMBL" id="CP000348">
    <property type="protein sequence ID" value="ABJ77973.1"/>
    <property type="molecule type" value="Genomic_DNA"/>
</dbReference>
<dbReference type="RefSeq" id="WP_011669396.1">
    <property type="nucleotide sequence ID" value="NC_008508.1"/>
</dbReference>
<dbReference type="SMR" id="Q055M2"/>
<dbReference type="KEGG" id="lbl:LBL_0365"/>
<dbReference type="HOGENOM" id="CLU_031040_10_0_12"/>
<dbReference type="GO" id="GO:0033744">
    <property type="term" value="F:L-methionine:thioredoxin-disulfide S-oxidoreductase activity"/>
    <property type="evidence" value="ECO:0007669"/>
    <property type="project" value="RHEA"/>
</dbReference>
<dbReference type="GO" id="GO:0008113">
    <property type="term" value="F:peptide-methionine (S)-S-oxide reductase activity"/>
    <property type="evidence" value="ECO:0007669"/>
    <property type="project" value="UniProtKB-UniRule"/>
</dbReference>
<dbReference type="GO" id="GO:0036211">
    <property type="term" value="P:protein modification process"/>
    <property type="evidence" value="ECO:0007669"/>
    <property type="project" value="UniProtKB-UniRule"/>
</dbReference>
<dbReference type="Gene3D" id="3.30.1060.10">
    <property type="entry name" value="Peptide methionine sulphoxide reductase MsrA"/>
    <property type="match status" value="1"/>
</dbReference>
<dbReference type="HAMAP" id="MF_01401">
    <property type="entry name" value="MsrA"/>
    <property type="match status" value="1"/>
</dbReference>
<dbReference type="InterPro" id="IPR002569">
    <property type="entry name" value="Met_Sox_Rdtase_MsrA_dom"/>
</dbReference>
<dbReference type="InterPro" id="IPR036509">
    <property type="entry name" value="Met_Sox_Rdtase_MsrA_sf"/>
</dbReference>
<dbReference type="NCBIfam" id="TIGR00401">
    <property type="entry name" value="msrA"/>
    <property type="match status" value="1"/>
</dbReference>
<dbReference type="PANTHER" id="PTHR43774">
    <property type="entry name" value="PEPTIDE METHIONINE SULFOXIDE REDUCTASE"/>
    <property type="match status" value="1"/>
</dbReference>
<dbReference type="PANTHER" id="PTHR43774:SF1">
    <property type="entry name" value="PEPTIDE METHIONINE SULFOXIDE REDUCTASE MSRA 2"/>
    <property type="match status" value="1"/>
</dbReference>
<dbReference type="Pfam" id="PF01625">
    <property type="entry name" value="PMSR"/>
    <property type="match status" value="1"/>
</dbReference>
<dbReference type="SUPFAM" id="SSF55068">
    <property type="entry name" value="Peptide methionine sulfoxide reductase"/>
    <property type="match status" value="1"/>
</dbReference>
<comment type="function">
    <text evidence="1">Has an important function as a repair enzyme for proteins that have been inactivated by oxidation. Catalyzes the reversible oxidation-reduction of methionine sulfoxide in proteins to methionine.</text>
</comment>
<comment type="catalytic activity">
    <reaction evidence="1">
        <text>L-methionyl-[protein] + [thioredoxin]-disulfide + H2O = L-methionyl-(S)-S-oxide-[protein] + [thioredoxin]-dithiol</text>
        <dbReference type="Rhea" id="RHEA:14217"/>
        <dbReference type="Rhea" id="RHEA-COMP:10698"/>
        <dbReference type="Rhea" id="RHEA-COMP:10700"/>
        <dbReference type="Rhea" id="RHEA-COMP:12313"/>
        <dbReference type="Rhea" id="RHEA-COMP:12315"/>
        <dbReference type="ChEBI" id="CHEBI:15377"/>
        <dbReference type="ChEBI" id="CHEBI:16044"/>
        <dbReference type="ChEBI" id="CHEBI:29950"/>
        <dbReference type="ChEBI" id="CHEBI:44120"/>
        <dbReference type="ChEBI" id="CHEBI:50058"/>
        <dbReference type="EC" id="1.8.4.11"/>
    </reaction>
</comment>
<comment type="catalytic activity">
    <reaction evidence="1">
        <text>[thioredoxin]-disulfide + L-methionine + H2O = L-methionine (S)-S-oxide + [thioredoxin]-dithiol</text>
        <dbReference type="Rhea" id="RHEA:19993"/>
        <dbReference type="Rhea" id="RHEA-COMP:10698"/>
        <dbReference type="Rhea" id="RHEA-COMP:10700"/>
        <dbReference type="ChEBI" id="CHEBI:15377"/>
        <dbReference type="ChEBI" id="CHEBI:29950"/>
        <dbReference type="ChEBI" id="CHEBI:50058"/>
        <dbReference type="ChEBI" id="CHEBI:57844"/>
        <dbReference type="ChEBI" id="CHEBI:58772"/>
        <dbReference type="EC" id="1.8.4.11"/>
    </reaction>
</comment>
<comment type="similarity">
    <text evidence="1">Belongs to the MsrA Met sulfoxide reductase family.</text>
</comment>
<name>MSRA_LEPBL</name>
<gene>
    <name evidence="1" type="primary">msrA</name>
    <name type="ordered locus">LBL_0365</name>
</gene>